<accession>O66433</accession>
<evidence type="ECO:0000255" key="1">
    <source>
        <dbReference type="HAMAP-Rule" id="MF_01369"/>
    </source>
</evidence>
<evidence type="ECO:0000305" key="2"/>
<dbReference type="EMBL" id="AE000657">
    <property type="protein sequence ID" value="AAC06397.1"/>
    <property type="molecule type" value="Genomic_DNA"/>
</dbReference>
<dbReference type="PIR" id="F70300">
    <property type="entry name" value="F70300"/>
</dbReference>
<dbReference type="RefSeq" id="NP_212991.1">
    <property type="nucleotide sequence ID" value="NC_000918.1"/>
</dbReference>
<dbReference type="RefSeq" id="WP_010879929.1">
    <property type="nucleotide sequence ID" value="NC_000918.1"/>
</dbReference>
<dbReference type="SMR" id="O66433"/>
<dbReference type="FunCoup" id="O66433">
    <property type="interactions" value="438"/>
</dbReference>
<dbReference type="STRING" id="224324.aq_012"/>
<dbReference type="EnsemblBacteria" id="AAC06397">
    <property type="protein sequence ID" value="AAC06397"/>
    <property type="gene ID" value="aq_012"/>
</dbReference>
<dbReference type="KEGG" id="aae:aq_012"/>
<dbReference type="PATRIC" id="fig|224324.8.peg.6"/>
<dbReference type="eggNOG" id="COG0089">
    <property type="taxonomic scope" value="Bacteria"/>
</dbReference>
<dbReference type="HOGENOM" id="CLU_037562_3_2_0"/>
<dbReference type="InParanoid" id="O66433"/>
<dbReference type="OrthoDB" id="9793353at2"/>
<dbReference type="Proteomes" id="UP000000798">
    <property type="component" value="Chromosome"/>
</dbReference>
<dbReference type="GO" id="GO:0022625">
    <property type="term" value="C:cytosolic large ribosomal subunit"/>
    <property type="evidence" value="ECO:0000318"/>
    <property type="project" value="GO_Central"/>
</dbReference>
<dbReference type="GO" id="GO:0019843">
    <property type="term" value="F:rRNA binding"/>
    <property type="evidence" value="ECO:0007669"/>
    <property type="project" value="UniProtKB-UniRule"/>
</dbReference>
<dbReference type="GO" id="GO:0003735">
    <property type="term" value="F:structural constituent of ribosome"/>
    <property type="evidence" value="ECO:0000318"/>
    <property type="project" value="GO_Central"/>
</dbReference>
<dbReference type="GO" id="GO:0006412">
    <property type="term" value="P:translation"/>
    <property type="evidence" value="ECO:0007669"/>
    <property type="project" value="UniProtKB-UniRule"/>
</dbReference>
<dbReference type="FunFam" id="3.30.70.330:FF:000001">
    <property type="entry name" value="50S ribosomal protein L23"/>
    <property type="match status" value="1"/>
</dbReference>
<dbReference type="Gene3D" id="3.30.70.330">
    <property type="match status" value="1"/>
</dbReference>
<dbReference type="HAMAP" id="MF_01369_B">
    <property type="entry name" value="Ribosomal_uL23_B"/>
    <property type="match status" value="1"/>
</dbReference>
<dbReference type="InterPro" id="IPR012677">
    <property type="entry name" value="Nucleotide-bd_a/b_plait_sf"/>
</dbReference>
<dbReference type="InterPro" id="IPR013025">
    <property type="entry name" value="Ribosomal_uL23-like"/>
</dbReference>
<dbReference type="InterPro" id="IPR012678">
    <property type="entry name" value="Ribosomal_uL23/eL15/eS24_sf"/>
</dbReference>
<dbReference type="InterPro" id="IPR001014">
    <property type="entry name" value="Ribosomal_uL23_CS"/>
</dbReference>
<dbReference type="NCBIfam" id="NF004359">
    <property type="entry name" value="PRK05738.1-3"/>
    <property type="match status" value="1"/>
</dbReference>
<dbReference type="NCBIfam" id="NF004363">
    <property type="entry name" value="PRK05738.2-4"/>
    <property type="match status" value="1"/>
</dbReference>
<dbReference type="PANTHER" id="PTHR11620">
    <property type="entry name" value="60S RIBOSOMAL PROTEIN L23A"/>
    <property type="match status" value="1"/>
</dbReference>
<dbReference type="Pfam" id="PF00276">
    <property type="entry name" value="Ribosomal_L23"/>
    <property type="match status" value="1"/>
</dbReference>
<dbReference type="SUPFAM" id="SSF54189">
    <property type="entry name" value="Ribosomal proteins S24e, L23 and L15e"/>
    <property type="match status" value="1"/>
</dbReference>
<dbReference type="PROSITE" id="PS00050">
    <property type="entry name" value="RIBOSOMAL_L23"/>
    <property type="match status" value="1"/>
</dbReference>
<sequence length="103" mass="12371">MSQRKPWEIIIRPIITEKSNRLMEDYNKYTFEVALDASKPEIKYAVEKLFNVKVKKVNTMIVKPKKKRVWNKFRQYGTTKKWKKAIVTLEKGHKIDILEFAQK</sequence>
<protein>
    <recommendedName>
        <fullName evidence="1">Large ribosomal subunit protein uL23</fullName>
    </recommendedName>
    <alternativeName>
        <fullName evidence="2">50S ribosomal protein L23</fullName>
    </alternativeName>
</protein>
<reference key="1">
    <citation type="journal article" date="1998" name="Nature">
        <title>The complete genome of the hyperthermophilic bacterium Aquifex aeolicus.</title>
        <authorList>
            <person name="Deckert G."/>
            <person name="Warren P.V."/>
            <person name="Gaasterland T."/>
            <person name="Young W.G."/>
            <person name="Lenox A.L."/>
            <person name="Graham D.E."/>
            <person name="Overbeek R."/>
            <person name="Snead M.A."/>
            <person name="Keller M."/>
            <person name="Aujay M."/>
            <person name="Huber R."/>
            <person name="Feldman R.A."/>
            <person name="Short J.M."/>
            <person name="Olsen G.J."/>
            <person name="Swanson R.V."/>
        </authorList>
    </citation>
    <scope>NUCLEOTIDE SEQUENCE [LARGE SCALE GENOMIC DNA]</scope>
    <source>
        <strain>VF5</strain>
    </source>
</reference>
<proteinExistence type="inferred from homology"/>
<keyword id="KW-1185">Reference proteome</keyword>
<keyword id="KW-0687">Ribonucleoprotein</keyword>
<keyword id="KW-0689">Ribosomal protein</keyword>
<keyword id="KW-0694">RNA-binding</keyword>
<keyword id="KW-0699">rRNA-binding</keyword>
<comment type="function">
    <text evidence="1">One of the early assembly proteins it binds 23S rRNA. One of the proteins that surrounds the polypeptide exit tunnel on the outside of the ribosome. Forms the main docking site for trigger factor binding to the ribosome.</text>
</comment>
<comment type="subunit">
    <text evidence="1">Part of the 50S ribosomal subunit. Contacts protein L29, and trigger factor when it is bound to the ribosome.</text>
</comment>
<comment type="similarity">
    <text evidence="1">Belongs to the universal ribosomal protein uL23 family.</text>
</comment>
<name>RL23_AQUAE</name>
<organism>
    <name type="scientific">Aquifex aeolicus (strain VF5)</name>
    <dbReference type="NCBI Taxonomy" id="224324"/>
    <lineage>
        <taxon>Bacteria</taxon>
        <taxon>Pseudomonadati</taxon>
        <taxon>Aquificota</taxon>
        <taxon>Aquificia</taxon>
        <taxon>Aquificales</taxon>
        <taxon>Aquificaceae</taxon>
        <taxon>Aquifex</taxon>
    </lineage>
</organism>
<gene>
    <name evidence="1" type="primary">rplW</name>
    <name type="ordered locus">aq_012</name>
</gene>
<feature type="chain" id="PRO_0000129394" description="Large ribosomal subunit protein uL23">
    <location>
        <begin position="1"/>
        <end position="103"/>
    </location>
</feature>